<protein>
    <recommendedName>
        <fullName evidence="3">Periviscerokinin-3</fullName>
        <shortName evidence="3">EubDi-PVK-3</shortName>
    </recommendedName>
</protein>
<proteinExistence type="evidence at protein level"/>
<dbReference type="GO" id="GO:0005576">
    <property type="term" value="C:extracellular region"/>
    <property type="evidence" value="ECO:0007669"/>
    <property type="project" value="UniProtKB-SubCell"/>
</dbReference>
<dbReference type="GO" id="GO:0007218">
    <property type="term" value="P:neuropeptide signaling pathway"/>
    <property type="evidence" value="ECO:0007669"/>
    <property type="project" value="UniProtKB-KW"/>
</dbReference>
<dbReference type="InterPro" id="IPR013231">
    <property type="entry name" value="Periviscerokinin"/>
</dbReference>
<dbReference type="Pfam" id="PF08259">
    <property type="entry name" value="Periviscerokin"/>
    <property type="match status" value="1"/>
</dbReference>
<sequence length="11" mass="1147">GSSGMIPFPRV</sequence>
<feature type="peptide" id="PRO_0000378830" description="Periviscerokinin-3" evidence="2">
    <location>
        <begin position="1"/>
        <end position="11"/>
    </location>
</feature>
<feature type="modified residue" description="Valine amide" evidence="2">
    <location>
        <position position="11"/>
    </location>
</feature>
<organism>
    <name type="scientific">Eublaberus distanti</name>
    <name type="common">Four-spotted cockroach</name>
    <dbReference type="NCBI Taxonomy" id="424761"/>
    <lineage>
        <taxon>Eukaryota</taxon>
        <taxon>Metazoa</taxon>
        <taxon>Ecdysozoa</taxon>
        <taxon>Arthropoda</taxon>
        <taxon>Hexapoda</taxon>
        <taxon>Insecta</taxon>
        <taxon>Pterygota</taxon>
        <taxon>Neoptera</taxon>
        <taxon>Polyneoptera</taxon>
        <taxon>Dictyoptera</taxon>
        <taxon>Blattodea</taxon>
        <taxon>Blaberoidea</taxon>
        <taxon>Blaberidae</taxon>
        <taxon>Blaberinae</taxon>
        <taxon>Eublaberus</taxon>
    </lineage>
</organism>
<comment type="function">
    <text evidence="4">Mediates visceral muscle contractile activity (myotropic activity).</text>
</comment>
<comment type="subcellular location">
    <subcellularLocation>
        <location evidence="4">Secreted</location>
    </subcellularLocation>
</comment>
<comment type="similarity">
    <text evidence="1">Belongs to the periviscerokinin family.</text>
</comment>
<name>PVK3_EUBDI</name>
<reference evidence="4" key="1">
    <citation type="journal article" date="2009" name="BMC Evol. Biol.">
        <title>A proteomic approach for studying insect phylogeny: CAPA peptides of ancient insect taxa (Dictyoptera, Blattoptera) as a test case.</title>
        <authorList>
            <person name="Roth S."/>
            <person name="Fromm B."/>
            <person name="Gaede G."/>
            <person name="Predel R."/>
        </authorList>
    </citation>
    <scope>PROTEIN SEQUENCE</scope>
    <scope>AMIDATION AT VAL-11</scope>
    <source>
        <tissue evidence="2">Abdominal perisympathetic organs</tissue>
    </source>
</reference>
<accession>P85616</accession>
<keyword id="KW-0027">Amidation</keyword>
<keyword id="KW-0903">Direct protein sequencing</keyword>
<keyword id="KW-0527">Neuropeptide</keyword>
<keyword id="KW-0964">Secreted</keyword>
<evidence type="ECO:0000255" key="1"/>
<evidence type="ECO:0000269" key="2">
    <source>
    </source>
</evidence>
<evidence type="ECO:0000303" key="3">
    <source>
    </source>
</evidence>
<evidence type="ECO:0000305" key="4"/>